<dbReference type="EC" id="6.-.-.-" evidence="1"/>
<dbReference type="EMBL" id="CP000922">
    <property type="protein sequence ID" value="ACJ34200.1"/>
    <property type="molecule type" value="Genomic_DNA"/>
</dbReference>
<dbReference type="RefSeq" id="WP_012575398.1">
    <property type="nucleotide sequence ID" value="NC_011567.1"/>
</dbReference>
<dbReference type="SMR" id="B7GGJ1"/>
<dbReference type="STRING" id="491915.Aflv_1839"/>
<dbReference type="GeneID" id="7038092"/>
<dbReference type="KEGG" id="afl:Aflv_1839"/>
<dbReference type="PATRIC" id="fig|491915.6.peg.1891"/>
<dbReference type="eggNOG" id="COG4365">
    <property type="taxonomic scope" value="Bacteria"/>
</dbReference>
<dbReference type="HOGENOM" id="CLU_022249_1_0_9"/>
<dbReference type="Proteomes" id="UP000000742">
    <property type="component" value="Chromosome"/>
</dbReference>
<dbReference type="GO" id="GO:0016874">
    <property type="term" value="F:ligase activity"/>
    <property type="evidence" value="ECO:0007669"/>
    <property type="project" value="UniProtKB-UniRule"/>
</dbReference>
<dbReference type="HAMAP" id="MF_01867">
    <property type="entry name" value="BshC"/>
    <property type="match status" value="1"/>
</dbReference>
<dbReference type="InterPro" id="IPR011199">
    <property type="entry name" value="Bacillithiol_biosynth_BshC"/>
</dbReference>
<dbReference type="InterPro" id="IPR055399">
    <property type="entry name" value="CC_BshC"/>
</dbReference>
<dbReference type="InterPro" id="IPR055398">
    <property type="entry name" value="Rossmann-like_BshC"/>
</dbReference>
<dbReference type="NCBIfam" id="TIGR03998">
    <property type="entry name" value="thiol_BshC"/>
    <property type="match status" value="1"/>
</dbReference>
<dbReference type="Pfam" id="PF24850">
    <property type="entry name" value="CC_BshC"/>
    <property type="match status" value="1"/>
</dbReference>
<dbReference type="Pfam" id="PF10079">
    <property type="entry name" value="Rossmann-like_BshC"/>
    <property type="match status" value="1"/>
</dbReference>
<dbReference type="PIRSF" id="PIRSF012535">
    <property type="entry name" value="UCP012535"/>
    <property type="match status" value="1"/>
</dbReference>
<accession>B7GGJ1</accession>
<reference key="1">
    <citation type="journal article" date="2008" name="Genome Biol.">
        <title>Encapsulated in silica: genome, proteome and physiology of the thermophilic bacterium Anoxybacillus flavithermus WK1.</title>
        <authorList>
            <person name="Saw J.H."/>
            <person name="Mountain B.W."/>
            <person name="Feng L."/>
            <person name="Omelchenko M.V."/>
            <person name="Hou S."/>
            <person name="Saito J.A."/>
            <person name="Stott M.B."/>
            <person name="Li D."/>
            <person name="Zhao G."/>
            <person name="Wu J."/>
            <person name="Galperin M.Y."/>
            <person name="Koonin E.V."/>
            <person name="Makarova K.S."/>
            <person name="Wolf Y.I."/>
            <person name="Rigden D.J."/>
            <person name="Dunfield P.F."/>
            <person name="Wang L."/>
            <person name="Alam M."/>
        </authorList>
    </citation>
    <scope>NUCLEOTIDE SEQUENCE [LARGE SCALE GENOMIC DNA]</scope>
    <source>
        <strain>DSM 21510 / WK1</strain>
    </source>
</reference>
<sequence length="536" mass="62890">MEVIELSLPATNRLATEYIEGTFPVHEAFHPCSFKERLHELHKRTYARDALVHHLLAYHKQFQASEETMANIEKLRHRESVVVIGGQQAGLLTGPLYTIYKIISIITLAKQQEQQLRVPVVPVFWMASEDHDMAEINYVHVAQRGKVKKYVYSPLAKEKRMAAHIELDADALKQWIDDIFKTFGETNVTNELRTYIYECMATSKTVADFFATIVLKLFAKEGIVIVDAAHPHLRAIEREWFMTLAHEHEAITTALQTQQRHLAQLGYEQAIDVSPMCAHLFYDDGQRRLLYYDDAQHCFYTKDGVYRFTPNELRQRIESEPQSFSNNVVTRPLMQEWLFPTLAFIAGPGEIAYWAELKRVFEHFHWHMPPIVPRLSLTLVERHIAADLADVHMTVAEALTNGTKQALEEWMRNNQPVAFDETFHEAKKQMAYIHEQLRQLGMQVDPHLEGIMLKNAERVETQIDYLQQLITRRMLQKHDVHVRKYERIELSLRPNNMPQERVWNVLYYMNRYGLDFVDRLLHVDYRWNGMHKIVYL</sequence>
<evidence type="ECO:0000255" key="1">
    <source>
        <dbReference type="HAMAP-Rule" id="MF_01867"/>
    </source>
</evidence>
<comment type="function">
    <text evidence="1">Involved in bacillithiol (BSH) biosynthesis. May catalyze the last step of the pathway, the addition of cysteine to glucosamine malate (GlcN-Mal) to generate BSH.</text>
</comment>
<comment type="similarity">
    <text evidence="1">Belongs to the BshC family.</text>
</comment>
<feature type="chain" id="PRO_0000378205" description="Putative cysteine ligase BshC">
    <location>
        <begin position="1"/>
        <end position="536"/>
    </location>
</feature>
<keyword id="KW-0436">Ligase</keyword>
<name>BSHC_ANOFW</name>
<gene>
    <name evidence="1" type="primary">bshC</name>
    <name type="ordered locus">Aflv_1839</name>
</gene>
<organism>
    <name type="scientific">Anoxybacillus flavithermus (strain DSM 21510 / WK1)</name>
    <dbReference type="NCBI Taxonomy" id="491915"/>
    <lineage>
        <taxon>Bacteria</taxon>
        <taxon>Bacillati</taxon>
        <taxon>Bacillota</taxon>
        <taxon>Bacilli</taxon>
        <taxon>Bacillales</taxon>
        <taxon>Anoxybacillaceae</taxon>
        <taxon>Anoxybacillus</taxon>
    </lineage>
</organism>
<proteinExistence type="inferred from homology"/>
<protein>
    <recommendedName>
        <fullName evidence="1">Putative cysteine ligase BshC</fullName>
        <ecNumber evidence="1">6.-.-.-</ecNumber>
    </recommendedName>
</protein>